<accession>B1I7V5</accession>
<organism>
    <name type="scientific">Streptococcus pneumoniae (strain Hungary19A-6)</name>
    <dbReference type="NCBI Taxonomy" id="487214"/>
    <lineage>
        <taxon>Bacteria</taxon>
        <taxon>Bacillati</taxon>
        <taxon>Bacillota</taxon>
        <taxon>Bacilli</taxon>
        <taxon>Lactobacillales</taxon>
        <taxon>Streptococcaceae</taxon>
        <taxon>Streptococcus</taxon>
    </lineage>
</organism>
<proteinExistence type="inferred from homology"/>
<sequence length="340" mass="36502">MTNKNAYAQSGVDVEAGYEVVERIKKHVARTERAGVMGALGGFGGMFDLSKTGVKEPVLISGTDGVGTKLMLAIKYDKHDTIGQDCVAMCVNDIIAAGAEPLYFLDYVATGKNEPAKLEQVVAGVAEGCVQAGAALIGGETAEMPGMYGEDDYDLAGFAVGVAEKSQIIDGSKVVEGDVLLGLASSGIHSNGYSLVRRVFADYTGEEVLPELEGKKLKEVLLEPTRIYVKAVLPLIKEELVNGIAHITGGGFIENVPRMFADDLAAEIDESKVPVLPIFKALEKYGQIKHEEMFEIFNMGVGLMLAVSPENVERVKELLDEAVYEIGRIVKKENESVIIK</sequence>
<reference key="1">
    <citation type="journal article" date="2010" name="Genome Biol.">
        <title>Structure and dynamics of the pan-genome of Streptococcus pneumoniae and closely related species.</title>
        <authorList>
            <person name="Donati C."/>
            <person name="Hiller N.L."/>
            <person name="Tettelin H."/>
            <person name="Muzzi A."/>
            <person name="Croucher N.J."/>
            <person name="Angiuoli S.V."/>
            <person name="Oggioni M."/>
            <person name="Dunning Hotopp J.C."/>
            <person name="Hu F.Z."/>
            <person name="Riley D.R."/>
            <person name="Covacci A."/>
            <person name="Mitchell T.J."/>
            <person name="Bentley S.D."/>
            <person name="Kilian M."/>
            <person name="Ehrlich G.D."/>
            <person name="Rappuoli R."/>
            <person name="Moxon E.R."/>
            <person name="Masignani V."/>
        </authorList>
    </citation>
    <scope>NUCLEOTIDE SEQUENCE [LARGE SCALE GENOMIC DNA]</scope>
    <source>
        <strain>Hungary19A-6</strain>
    </source>
</reference>
<protein>
    <recommendedName>
        <fullName evidence="1">Phosphoribosylformylglycinamidine cyclo-ligase</fullName>
        <ecNumber evidence="1">6.3.3.1</ecNumber>
    </recommendedName>
    <alternativeName>
        <fullName evidence="1">AIR synthase</fullName>
    </alternativeName>
    <alternativeName>
        <fullName evidence="1">AIRS</fullName>
    </alternativeName>
    <alternativeName>
        <fullName evidence="1">Phosphoribosyl-aminoimidazole synthetase</fullName>
    </alternativeName>
</protein>
<evidence type="ECO:0000255" key="1">
    <source>
        <dbReference type="HAMAP-Rule" id="MF_00741"/>
    </source>
</evidence>
<name>PUR5_STRPI</name>
<comment type="catalytic activity">
    <reaction evidence="1">
        <text>2-formamido-N(1)-(5-O-phospho-beta-D-ribosyl)acetamidine + ATP = 5-amino-1-(5-phospho-beta-D-ribosyl)imidazole + ADP + phosphate + H(+)</text>
        <dbReference type="Rhea" id="RHEA:23032"/>
        <dbReference type="ChEBI" id="CHEBI:15378"/>
        <dbReference type="ChEBI" id="CHEBI:30616"/>
        <dbReference type="ChEBI" id="CHEBI:43474"/>
        <dbReference type="ChEBI" id="CHEBI:137981"/>
        <dbReference type="ChEBI" id="CHEBI:147287"/>
        <dbReference type="ChEBI" id="CHEBI:456216"/>
        <dbReference type="EC" id="6.3.3.1"/>
    </reaction>
</comment>
<comment type="pathway">
    <text evidence="1">Purine metabolism; IMP biosynthesis via de novo pathway; 5-amino-1-(5-phospho-D-ribosyl)imidazole from N(2)-formyl-N(1)-(5-phospho-D-ribosyl)glycinamide: step 2/2.</text>
</comment>
<comment type="subcellular location">
    <subcellularLocation>
        <location evidence="1">Cytoplasm</location>
    </subcellularLocation>
</comment>
<comment type="similarity">
    <text evidence="1">Belongs to the AIR synthase family.</text>
</comment>
<keyword id="KW-0067">ATP-binding</keyword>
<keyword id="KW-0963">Cytoplasm</keyword>
<keyword id="KW-0436">Ligase</keyword>
<keyword id="KW-0547">Nucleotide-binding</keyword>
<keyword id="KW-0658">Purine biosynthesis</keyword>
<feature type="chain" id="PRO_1000193048" description="Phosphoribosylformylglycinamidine cyclo-ligase">
    <location>
        <begin position="1"/>
        <end position="340"/>
    </location>
</feature>
<dbReference type="EC" id="6.3.3.1" evidence="1"/>
<dbReference type="EMBL" id="CP000936">
    <property type="protein sequence ID" value="ACA36868.1"/>
    <property type="molecule type" value="Genomic_DNA"/>
</dbReference>
<dbReference type="RefSeq" id="WP_000182575.1">
    <property type="nucleotide sequence ID" value="NC_010380.1"/>
</dbReference>
<dbReference type="SMR" id="B1I7V5"/>
<dbReference type="KEGG" id="spv:SPH_0154"/>
<dbReference type="HOGENOM" id="CLU_047116_0_0_9"/>
<dbReference type="UniPathway" id="UPA00074">
    <property type="reaction ID" value="UER00129"/>
</dbReference>
<dbReference type="Proteomes" id="UP000002163">
    <property type="component" value="Chromosome"/>
</dbReference>
<dbReference type="GO" id="GO:0005829">
    <property type="term" value="C:cytosol"/>
    <property type="evidence" value="ECO:0007669"/>
    <property type="project" value="TreeGrafter"/>
</dbReference>
<dbReference type="GO" id="GO:0005524">
    <property type="term" value="F:ATP binding"/>
    <property type="evidence" value="ECO:0007669"/>
    <property type="project" value="UniProtKB-KW"/>
</dbReference>
<dbReference type="GO" id="GO:0004637">
    <property type="term" value="F:phosphoribosylamine-glycine ligase activity"/>
    <property type="evidence" value="ECO:0007669"/>
    <property type="project" value="TreeGrafter"/>
</dbReference>
<dbReference type="GO" id="GO:0004641">
    <property type="term" value="F:phosphoribosylformylglycinamidine cyclo-ligase activity"/>
    <property type="evidence" value="ECO:0007669"/>
    <property type="project" value="UniProtKB-UniRule"/>
</dbReference>
<dbReference type="GO" id="GO:0006189">
    <property type="term" value="P:'de novo' IMP biosynthetic process"/>
    <property type="evidence" value="ECO:0007669"/>
    <property type="project" value="UniProtKB-UniRule"/>
</dbReference>
<dbReference type="GO" id="GO:0046084">
    <property type="term" value="P:adenine biosynthetic process"/>
    <property type="evidence" value="ECO:0007669"/>
    <property type="project" value="TreeGrafter"/>
</dbReference>
<dbReference type="CDD" id="cd02196">
    <property type="entry name" value="PurM"/>
    <property type="match status" value="1"/>
</dbReference>
<dbReference type="FunFam" id="3.30.1330.10:FF:000001">
    <property type="entry name" value="Phosphoribosylformylglycinamidine cyclo-ligase"/>
    <property type="match status" value="1"/>
</dbReference>
<dbReference type="FunFam" id="3.90.650.10:FF:000011">
    <property type="entry name" value="Phosphoribosylformylglycinamidine cyclo-ligase"/>
    <property type="match status" value="1"/>
</dbReference>
<dbReference type="Gene3D" id="3.90.650.10">
    <property type="entry name" value="PurM-like C-terminal domain"/>
    <property type="match status" value="1"/>
</dbReference>
<dbReference type="Gene3D" id="3.30.1330.10">
    <property type="entry name" value="PurM-like, N-terminal domain"/>
    <property type="match status" value="1"/>
</dbReference>
<dbReference type="HAMAP" id="MF_00741">
    <property type="entry name" value="AIRS"/>
    <property type="match status" value="1"/>
</dbReference>
<dbReference type="InterPro" id="IPR010918">
    <property type="entry name" value="PurM-like_C_dom"/>
</dbReference>
<dbReference type="InterPro" id="IPR036676">
    <property type="entry name" value="PurM-like_C_sf"/>
</dbReference>
<dbReference type="InterPro" id="IPR016188">
    <property type="entry name" value="PurM-like_N"/>
</dbReference>
<dbReference type="InterPro" id="IPR036921">
    <property type="entry name" value="PurM-like_N_sf"/>
</dbReference>
<dbReference type="InterPro" id="IPR004733">
    <property type="entry name" value="PurM_cligase"/>
</dbReference>
<dbReference type="NCBIfam" id="TIGR00878">
    <property type="entry name" value="purM"/>
    <property type="match status" value="1"/>
</dbReference>
<dbReference type="PANTHER" id="PTHR10520:SF12">
    <property type="entry name" value="TRIFUNCTIONAL PURINE BIOSYNTHETIC PROTEIN ADENOSINE-3"/>
    <property type="match status" value="1"/>
</dbReference>
<dbReference type="PANTHER" id="PTHR10520">
    <property type="entry name" value="TRIFUNCTIONAL PURINE BIOSYNTHETIC PROTEIN ADENOSINE-3-RELATED"/>
    <property type="match status" value="1"/>
</dbReference>
<dbReference type="Pfam" id="PF00586">
    <property type="entry name" value="AIRS"/>
    <property type="match status" value="1"/>
</dbReference>
<dbReference type="Pfam" id="PF02769">
    <property type="entry name" value="AIRS_C"/>
    <property type="match status" value="1"/>
</dbReference>
<dbReference type="SUPFAM" id="SSF56042">
    <property type="entry name" value="PurM C-terminal domain-like"/>
    <property type="match status" value="1"/>
</dbReference>
<dbReference type="SUPFAM" id="SSF55326">
    <property type="entry name" value="PurM N-terminal domain-like"/>
    <property type="match status" value="1"/>
</dbReference>
<gene>
    <name evidence="1" type="primary">purM</name>
    <name type="ordered locus">SPH_0154</name>
</gene>